<keyword id="KW-0479">Metal-binding</keyword>
<keyword id="KW-1185">Reference proteome</keyword>
<keyword id="KW-0687">Ribonucleoprotein</keyword>
<keyword id="KW-0689">Ribosomal protein</keyword>
<keyword id="KW-0694">RNA-binding</keyword>
<keyword id="KW-0699">rRNA-binding</keyword>
<keyword id="KW-0862">Zinc</keyword>
<reference key="1">
    <citation type="submission" date="2007-05" db="EMBL/GenBank/DDBJ databases">
        <title>Complete sequence of Geobacter uraniireducens Rf4.</title>
        <authorList>
            <consortium name="US DOE Joint Genome Institute"/>
            <person name="Copeland A."/>
            <person name="Lucas S."/>
            <person name="Lapidus A."/>
            <person name="Barry K."/>
            <person name="Detter J.C."/>
            <person name="Glavina del Rio T."/>
            <person name="Hammon N."/>
            <person name="Israni S."/>
            <person name="Dalin E."/>
            <person name="Tice H."/>
            <person name="Pitluck S."/>
            <person name="Chertkov O."/>
            <person name="Brettin T."/>
            <person name="Bruce D."/>
            <person name="Han C."/>
            <person name="Schmutz J."/>
            <person name="Larimer F."/>
            <person name="Land M."/>
            <person name="Hauser L."/>
            <person name="Kyrpides N."/>
            <person name="Mikhailova N."/>
            <person name="Shelobolina E."/>
            <person name="Aklujkar M."/>
            <person name="Lovley D."/>
            <person name="Richardson P."/>
        </authorList>
    </citation>
    <scope>NUCLEOTIDE SEQUENCE [LARGE SCALE GENOMIC DNA]</scope>
    <source>
        <strain>ATCC BAA-1134 / JCM 13001 / Rf4</strain>
    </source>
</reference>
<organism>
    <name type="scientific">Geotalea uraniireducens (strain Rf4)</name>
    <name type="common">Geobacter uraniireducens</name>
    <dbReference type="NCBI Taxonomy" id="351605"/>
    <lineage>
        <taxon>Bacteria</taxon>
        <taxon>Pseudomonadati</taxon>
        <taxon>Thermodesulfobacteriota</taxon>
        <taxon>Desulfuromonadia</taxon>
        <taxon>Geobacterales</taxon>
        <taxon>Geobacteraceae</taxon>
        <taxon>Geotalea</taxon>
    </lineage>
</organism>
<accession>A5GAV5</accession>
<dbReference type="EMBL" id="CP000698">
    <property type="protein sequence ID" value="ABQ25285.1"/>
    <property type="molecule type" value="Genomic_DNA"/>
</dbReference>
<dbReference type="RefSeq" id="WP_010943473.1">
    <property type="nucleotide sequence ID" value="NC_009483.1"/>
</dbReference>
<dbReference type="SMR" id="A5GAV5"/>
<dbReference type="STRING" id="351605.Gura_1079"/>
<dbReference type="KEGG" id="gur:Gura_1079"/>
<dbReference type="HOGENOM" id="CLU_139869_3_0_7"/>
<dbReference type="OrthoDB" id="9810484at2"/>
<dbReference type="Proteomes" id="UP000006695">
    <property type="component" value="Chromosome"/>
</dbReference>
<dbReference type="GO" id="GO:0005737">
    <property type="term" value="C:cytoplasm"/>
    <property type="evidence" value="ECO:0007669"/>
    <property type="project" value="UniProtKB-ARBA"/>
</dbReference>
<dbReference type="GO" id="GO:0015935">
    <property type="term" value="C:small ribosomal subunit"/>
    <property type="evidence" value="ECO:0007669"/>
    <property type="project" value="TreeGrafter"/>
</dbReference>
<dbReference type="GO" id="GO:0019843">
    <property type="term" value="F:rRNA binding"/>
    <property type="evidence" value="ECO:0007669"/>
    <property type="project" value="UniProtKB-UniRule"/>
</dbReference>
<dbReference type="GO" id="GO:0003735">
    <property type="term" value="F:structural constituent of ribosome"/>
    <property type="evidence" value="ECO:0007669"/>
    <property type="project" value="InterPro"/>
</dbReference>
<dbReference type="GO" id="GO:0008270">
    <property type="term" value="F:zinc ion binding"/>
    <property type="evidence" value="ECO:0007669"/>
    <property type="project" value="UniProtKB-UniRule"/>
</dbReference>
<dbReference type="GO" id="GO:0006412">
    <property type="term" value="P:translation"/>
    <property type="evidence" value="ECO:0007669"/>
    <property type="project" value="UniProtKB-UniRule"/>
</dbReference>
<dbReference type="FunFam" id="4.10.830.10:FF:000001">
    <property type="entry name" value="30S ribosomal protein S14 type Z"/>
    <property type="match status" value="1"/>
</dbReference>
<dbReference type="Gene3D" id="4.10.830.10">
    <property type="entry name" value="30s Ribosomal Protein S14, Chain N"/>
    <property type="match status" value="1"/>
</dbReference>
<dbReference type="HAMAP" id="MF_01364_B">
    <property type="entry name" value="Ribosomal_uS14_2_B"/>
    <property type="match status" value="1"/>
</dbReference>
<dbReference type="InterPro" id="IPR001209">
    <property type="entry name" value="Ribosomal_uS14"/>
</dbReference>
<dbReference type="InterPro" id="IPR023053">
    <property type="entry name" value="Ribosomal_uS14_bact"/>
</dbReference>
<dbReference type="InterPro" id="IPR018271">
    <property type="entry name" value="Ribosomal_uS14_CS"/>
</dbReference>
<dbReference type="InterPro" id="IPR043140">
    <property type="entry name" value="Ribosomal_uS14_sf"/>
</dbReference>
<dbReference type="NCBIfam" id="NF005974">
    <property type="entry name" value="PRK08061.1"/>
    <property type="match status" value="1"/>
</dbReference>
<dbReference type="PANTHER" id="PTHR19836">
    <property type="entry name" value="30S RIBOSOMAL PROTEIN S14"/>
    <property type="match status" value="1"/>
</dbReference>
<dbReference type="PANTHER" id="PTHR19836:SF19">
    <property type="entry name" value="SMALL RIBOSOMAL SUBUNIT PROTEIN US14M"/>
    <property type="match status" value="1"/>
</dbReference>
<dbReference type="Pfam" id="PF00253">
    <property type="entry name" value="Ribosomal_S14"/>
    <property type="match status" value="1"/>
</dbReference>
<dbReference type="SUPFAM" id="SSF57716">
    <property type="entry name" value="Glucocorticoid receptor-like (DNA-binding domain)"/>
    <property type="match status" value="1"/>
</dbReference>
<dbReference type="PROSITE" id="PS00527">
    <property type="entry name" value="RIBOSOMAL_S14"/>
    <property type="match status" value="1"/>
</dbReference>
<gene>
    <name evidence="1" type="primary">rpsZ</name>
    <name evidence="1" type="synonym">rpsN</name>
    <name type="ordered locus">Gura_1079</name>
</gene>
<evidence type="ECO:0000255" key="1">
    <source>
        <dbReference type="HAMAP-Rule" id="MF_01364"/>
    </source>
</evidence>
<evidence type="ECO:0000305" key="2"/>
<name>RS14Z_GEOUR</name>
<protein>
    <recommendedName>
        <fullName evidence="1">Small ribosomal subunit protein uS14</fullName>
    </recommendedName>
    <alternativeName>
        <fullName evidence="2">30S ribosomal protein S14 type Z</fullName>
    </alternativeName>
</protein>
<sequence length="61" mass="7071">MAKTSMIIKAQRGSKFKVREYNRCPLCGRPRAYYRKFDMCRICLRKLASAGQIPGVIKSSW</sequence>
<proteinExistence type="inferred from homology"/>
<comment type="function">
    <text evidence="1">Binds 16S rRNA, required for the assembly of 30S particles and may also be responsible for determining the conformation of the 16S rRNA at the A site.</text>
</comment>
<comment type="cofactor">
    <cofactor evidence="1">
        <name>Zn(2+)</name>
        <dbReference type="ChEBI" id="CHEBI:29105"/>
    </cofactor>
    <text evidence="1">Binds 1 zinc ion per subunit.</text>
</comment>
<comment type="subunit">
    <text evidence="1">Part of the 30S ribosomal subunit. Contacts proteins S3 and S10.</text>
</comment>
<comment type="similarity">
    <text evidence="1">Belongs to the universal ribosomal protein uS14 family. Zinc-binding uS14 subfamily.</text>
</comment>
<feature type="chain" id="PRO_1000087015" description="Small ribosomal subunit protein uS14">
    <location>
        <begin position="1"/>
        <end position="61"/>
    </location>
</feature>
<feature type="binding site" evidence="1">
    <location>
        <position position="24"/>
    </location>
    <ligand>
        <name>Zn(2+)</name>
        <dbReference type="ChEBI" id="CHEBI:29105"/>
    </ligand>
</feature>
<feature type="binding site" evidence="1">
    <location>
        <position position="27"/>
    </location>
    <ligand>
        <name>Zn(2+)</name>
        <dbReference type="ChEBI" id="CHEBI:29105"/>
    </ligand>
</feature>
<feature type="binding site" evidence="1">
    <location>
        <position position="40"/>
    </location>
    <ligand>
        <name>Zn(2+)</name>
        <dbReference type="ChEBI" id="CHEBI:29105"/>
    </ligand>
</feature>
<feature type="binding site" evidence="1">
    <location>
        <position position="43"/>
    </location>
    <ligand>
        <name>Zn(2+)</name>
        <dbReference type="ChEBI" id="CHEBI:29105"/>
    </ligand>
</feature>